<dbReference type="EMBL" id="BA000019">
    <property type="protein sequence ID" value="BAB74092.1"/>
    <property type="molecule type" value="Genomic_DNA"/>
</dbReference>
<dbReference type="EMBL" id="U09240">
    <property type="protein sequence ID" value="AAA18030.1"/>
    <property type="molecule type" value="Unassigned_DNA"/>
</dbReference>
<dbReference type="EMBL" id="S76266">
    <property type="protein sequence ID" value="AAB33743.2"/>
    <property type="molecule type" value="Genomic_DNA"/>
</dbReference>
<dbReference type="PIR" id="AB2105">
    <property type="entry name" value="AB2105"/>
</dbReference>
<dbReference type="STRING" id="103690.gene:10494423"/>
<dbReference type="TCDB" id="1.V.1.1.1">
    <property type="family name" value="the filamentous cyanobacterial septal pore (septum) family"/>
</dbReference>
<dbReference type="KEGG" id="ana:alr2393"/>
<dbReference type="eggNOG" id="ENOG502ZXWV">
    <property type="taxonomic scope" value="Bacteria"/>
</dbReference>
<dbReference type="OrthoDB" id="527058at2"/>
<dbReference type="Proteomes" id="UP000002483">
    <property type="component" value="Chromosome"/>
</dbReference>
<dbReference type="InterPro" id="IPR020360">
    <property type="entry name" value="Uncharacterised_alr2393"/>
</dbReference>
<dbReference type="NCBIfam" id="NF037953">
    <property type="entry name" value="frad"/>
    <property type="match status" value="1"/>
</dbReference>
<dbReference type="Pfam" id="PF17310">
    <property type="entry name" value="DUF5357"/>
    <property type="match status" value="1"/>
</dbReference>
<reference key="1">
    <citation type="journal article" date="2001" name="DNA Res.">
        <title>Complete genomic sequence of the filamentous nitrogen-fixing cyanobacterium Anabaena sp. strain PCC 7120.</title>
        <authorList>
            <person name="Kaneko T."/>
            <person name="Nakamura Y."/>
            <person name="Wolk C.P."/>
            <person name="Kuritz T."/>
            <person name="Sasamoto S."/>
            <person name="Watanabe A."/>
            <person name="Iriguchi M."/>
            <person name="Ishikawa A."/>
            <person name="Kawashima K."/>
            <person name="Kimura T."/>
            <person name="Kishida Y."/>
            <person name="Kohara M."/>
            <person name="Matsumoto M."/>
            <person name="Matsuno A."/>
            <person name="Muraki A."/>
            <person name="Nakazaki N."/>
            <person name="Shimpo S."/>
            <person name="Sugimoto M."/>
            <person name="Takazawa M."/>
            <person name="Yamada M."/>
            <person name="Yasuda M."/>
            <person name="Tabata S."/>
        </authorList>
    </citation>
    <scope>NUCLEOTIDE SEQUENCE [LARGE SCALE GENOMIC DNA]</scope>
    <source>
        <strain>PCC 7120 / SAG 25.82 / UTEX 2576</strain>
    </source>
</reference>
<reference key="2">
    <citation type="journal article" date="1995" name="J. Bacteriol.">
        <title>A short-filament mutant of Anabaena sp. strain PCC 7120 that fragments in nitrogen-deficient medium.</title>
        <authorList>
            <person name="Bauer C.C."/>
            <person name="Buikema W.J."/>
            <person name="Black K."/>
            <person name="Haselkorn R."/>
        </authorList>
    </citation>
    <scope>NUCLEOTIDE SEQUENCE [GENOMIC DNA] OF 1-172</scope>
</reference>
<protein>
    <recommendedName>
        <fullName>Uncharacterized protein alr2393</fullName>
    </recommendedName>
</protein>
<name>Y2393_NOSS1</name>
<organism>
    <name type="scientific">Nostoc sp. (strain PCC 7120 / SAG 25.82 / UTEX 2576)</name>
    <dbReference type="NCBI Taxonomy" id="103690"/>
    <lineage>
        <taxon>Bacteria</taxon>
        <taxon>Bacillati</taxon>
        <taxon>Cyanobacteriota</taxon>
        <taxon>Cyanophyceae</taxon>
        <taxon>Nostocales</taxon>
        <taxon>Nostocaceae</taxon>
        <taxon>Nostoc</taxon>
    </lineage>
</organism>
<sequence length="343" mass="39313">MNLLFKDLFGIFKIFEDVYERIRKILIPTTAYSWQTFIYLSVFSWIMSYFATGYIRDIIALCGWLFLIAGTAWYTTDDPLRVPGTFMPVGAVITGFLVSVFAFSNQEDVITSRTIVLWPTISALITAIPEFIEGSDTDSKTRIPKPDARQKIIVLVASCMMISCWLQFYFVLDKWLQEYPSLLAENFGRSTFVITREEQQKIPTNGVVILDRLQPLVEEQIAERPWSEVERWLLEANVRVGQLGREVLDNNLAQYEEKVLWRVEPRVVNNKSGYRLDLLSIWTGPTANPRGYFLRKSCQIDPVATTPINTTTNSRIPEEKKAVAEIQCDRLNKLFSGAAPPQQ</sequence>
<evidence type="ECO:0000305" key="1"/>
<feature type="chain" id="PRO_0000208896" description="Uncharacterized protein alr2393">
    <location>
        <begin position="1"/>
        <end position="343"/>
    </location>
</feature>
<feature type="sequence conflict" description="In Ref. 2." evidence="1" ref="2">
    <original>CWLQFYFVL</original>
    <variation>MASVLLC</variation>
    <location>
        <begin position="164"/>
        <end position="172"/>
    </location>
</feature>
<keyword id="KW-1185">Reference proteome</keyword>
<gene>
    <name type="ordered locus">alr2393</name>
</gene>
<accession>P46079</accession>
<accession>Q53487</accession>
<proteinExistence type="predicted"/>